<comment type="function">
    <text evidence="1">Catalyzes the GTP-dependent ribosomal translocation step during translation elongation. During this step, the ribosome changes from the pre-translocational (PRE) to the post-translocational (POST) state as the newly formed A-site-bound peptidyl-tRNA and P-site-bound deacylated tRNA move to the P and E sites, respectively. Catalyzes the coordinated movement of the two tRNA molecules, the mRNA and conformational changes in the ribosome.</text>
</comment>
<comment type="subcellular location">
    <subcellularLocation>
        <location evidence="1">Cytoplasm</location>
    </subcellularLocation>
</comment>
<comment type="similarity">
    <text evidence="1">Belongs to the TRAFAC class translation factor GTPase superfamily. Classic translation factor GTPase family. EF-G/EF-2 subfamily.</text>
</comment>
<name>EFG2_BORPA</name>
<sequence>MTRRTSIERYRNIGISAHIDAGKTTTTERILFYTGITHKLGEVHEGAATMDWMEQERGITITSAATTAFWRGMAGNYPEHRINIIDTPGHVDFTIEVERSMRVLDGACMVYDSVGGVQPQSETVWRQANKYGVPRIAFVNKMDRVGADFFRVQRQIVERLKGDAVPIQIPVGAEDHFEGVVDLVKMKAIIWDDASQGVRFEYRDIPPELQAQAEQWREKMIEKAAEANEALLEKYLSGQPLSEDEIKSGLRARTVANEIVPMLCGSAFKNKGVQAMLDAVIDYLPSPADVPAIIGHDERDREIERHPADDEPFSALAFKIMTDPFVGQLVFFRVYSGVVKSGDSVLNPLKSKKERLGRILQMHANERREISEVYAGDIAAAVGIKEITTGDTLTDPAHVIILERMTFPEPVISQAVEPRTKADQEKMGIALNRLAQEDPSFRVRTDEESGQTIISGMGELHLEILVDRMKREFGVEANVGKPQVAYRETIRSTVTDVEGKFVKQSGGRGQYGHVVLKLEPQEQGKGYEFVDAIKGGVVPREFIPAVDRGVRETLNTGVLAGYPVVDVKVTLVFGSYHDVDSNENAFRMAASMAFKEGMRRAKPVLLEPMMHVEVETPEDFTGNVMGDLSSRRGMVQGMEDIAGGGGKLVRAEVPLAEMFGYSTSLRSLTQGRATYSMEFKHYAEAPRQVAEQIIAARGSGAAARG</sequence>
<feature type="chain" id="PRO_0000091085" description="Elongation factor G 2">
    <location>
        <begin position="1"/>
        <end position="705"/>
    </location>
</feature>
<feature type="domain" description="tr-type G">
    <location>
        <begin position="8"/>
        <end position="288"/>
    </location>
</feature>
<feature type="binding site" evidence="1">
    <location>
        <begin position="17"/>
        <end position="24"/>
    </location>
    <ligand>
        <name>GTP</name>
        <dbReference type="ChEBI" id="CHEBI:37565"/>
    </ligand>
</feature>
<feature type="binding site" evidence="1">
    <location>
        <begin position="86"/>
        <end position="90"/>
    </location>
    <ligand>
        <name>GTP</name>
        <dbReference type="ChEBI" id="CHEBI:37565"/>
    </ligand>
</feature>
<feature type="binding site" evidence="1">
    <location>
        <begin position="140"/>
        <end position="143"/>
    </location>
    <ligand>
        <name>GTP</name>
        <dbReference type="ChEBI" id="CHEBI:37565"/>
    </ligand>
</feature>
<keyword id="KW-0963">Cytoplasm</keyword>
<keyword id="KW-0251">Elongation factor</keyword>
<keyword id="KW-0342">GTP-binding</keyword>
<keyword id="KW-0547">Nucleotide-binding</keyword>
<keyword id="KW-0648">Protein biosynthesis</keyword>
<protein>
    <recommendedName>
        <fullName evidence="1">Elongation factor G 2</fullName>
        <shortName evidence="1">EF-G 2</shortName>
    </recommendedName>
</protein>
<evidence type="ECO:0000255" key="1">
    <source>
        <dbReference type="HAMAP-Rule" id="MF_00054"/>
    </source>
</evidence>
<reference key="1">
    <citation type="journal article" date="2003" name="Nat. Genet.">
        <title>Comparative analysis of the genome sequences of Bordetella pertussis, Bordetella parapertussis and Bordetella bronchiseptica.</title>
        <authorList>
            <person name="Parkhill J."/>
            <person name="Sebaihia M."/>
            <person name="Preston A."/>
            <person name="Murphy L.D."/>
            <person name="Thomson N.R."/>
            <person name="Harris D.E."/>
            <person name="Holden M.T.G."/>
            <person name="Churcher C.M."/>
            <person name="Bentley S.D."/>
            <person name="Mungall K.L."/>
            <person name="Cerdeno-Tarraga A.-M."/>
            <person name="Temple L."/>
            <person name="James K.D."/>
            <person name="Harris B."/>
            <person name="Quail M.A."/>
            <person name="Achtman M."/>
            <person name="Atkin R."/>
            <person name="Baker S."/>
            <person name="Basham D."/>
            <person name="Bason N."/>
            <person name="Cherevach I."/>
            <person name="Chillingworth T."/>
            <person name="Collins M."/>
            <person name="Cronin A."/>
            <person name="Davis P."/>
            <person name="Doggett J."/>
            <person name="Feltwell T."/>
            <person name="Goble A."/>
            <person name="Hamlin N."/>
            <person name="Hauser H."/>
            <person name="Holroyd S."/>
            <person name="Jagels K."/>
            <person name="Leather S."/>
            <person name="Moule S."/>
            <person name="Norberczak H."/>
            <person name="O'Neil S."/>
            <person name="Ormond D."/>
            <person name="Price C."/>
            <person name="Rabbinowitsch E."/>
            <person name="Rutter S."/>
            <person name="Sanders M."/>
            <person name="Saunders D."/>
            <person name="Seeger K."/>
            <person name="Sharp S."/>
            <person name="Simmonds M."/>
            <person name="Skelton J."/>
            <person name="Squares R."/>
            <person name="Squares S."/>
            <person name="Stevens K."/>
            <person name="Unwin L."/>
            <person name="Whitehead S."/>
            <person name="Barrell B.G."/>
            <person name="Maskell D.J."/>
        </authorList>
    </citation>
    <scope>NUCLEOTIDE SEQUENCE [LARGE SCALE GENOMIC DNA]</scope>
    <source>
        <strain>12822 / ATCC BAA-587 / NCTC 13253</strain>
    </source>
</reference>
<accession>Q7W455</accession>
<gene>
    <name evidence="1" type="primary">fusA2</name>
    <name type="ordered locus">BPP3814</name>
</gene>
<dbReference type="EMBL" id="BX640434">
    <property type="protein sequence ID" value="CAE39097.1"/>
    <property type="molecule type" value="Genomic_DNA"/>
</dbReference>
<dbReference type="RefSeq" id="WP_010929259.1">
    <property type="nucleotide sequence ID" value="NC_002928.3"/>
</dbReference>
<dbReference type="SMR" id="Q7W455"/>
<dbReference type="GeneID" id="93205610"/>
<dbReference type="KEGG" id="bpa:BPP3814"/>
<dbReference type="HOGENOM" id="CLU_002794_4_1_4"/>
<dbReference type="Proteomes" id="UP000001421">
    <property type="component" value="Chromosome"/>
</dbReference>
<dbReference type="GO" id="GO:0005737">
    <property type="term" value="C:cytoplasm"/>
    <property type="evidence" value="ECO:0007669"/>
    <property type="project" value="UniProtKB-SubCell"/>
</dbReference>
<dbReference type="GO" id="GO:0005525">
    <property type="term" value="F:GTP binding"/>
    <property type="evidence" value="ECO:0007669"/>
    <property type="project" value="UniProtKB-UniRule"/>
</dbReference>
<dbReference type="GO" id="GO:0003924">
    <property type="term" value="F:GTPase activity"/>
    <property type="evidence" value="ECO:0007669"/>
    <property type="project" value="InterPro"/>
</dbReference>
<dbReference type="GO" id="GO:0097216">
    <property type="term" value="F:guanosine tetraphosphate binding"/>
    <property type="evidence" value="ECO:0007669"/>
    <property type="project" value="UniProtKB-ARBA"/>
</dbReference>
<dbReference type="GO" id="GO:0003746">
    <property type="term" value="F:translation elongation factor activity"/>
    <property type="evidence" value="ECO:0007669"/>
    <property type="project" value="UniProtKB-UniRule"/>
</dbReference>
<dbReference type="GO" id="GO:0032790">
    <property type="term" value="P:ribosome disassembly"/>
    <property type="evidence" value="ECO:0007669"/>
    <property type="project" value="TreeGrafter"/>
</dbReference>
<dbReference type="CDD" id="cd01886">
    <property type="entry name" value="EF-G"/>
    <property type="match status" value="1"/>
</dbReference>
<dbReference type="CDD" id="cd16262">
    <property type="entry name" value="EFG_III"/>
    <property type="match status" value="1"/>
</dbReference>
<dbReference type="CDD" id="cd01434">
    <property type="entry name" value="EFG_mtEFG1_IV"/>
    <property type="match status" value="1"/>
</dbReference>
<dbReference type="CDD" id="cd03713">
    <property type="entry name" value="EFG_mtEFG_C"/>
    <property type="match status" value="1"/>
</dbReference>
<dbReference type="CDD" id="cd04088">
    <property type="entry name" value="EFG_mtEFG_II"/>
    <property type="match status" value="1"/>
</dbReference>
<dbReference type="FunFam" id="2.40.30.10:FF:000006">
    <property type="entry name" value="Elongation factor G"/>
    <property type="match status" value="1"/>
</dbReference>
<dbReference type="FunFam" id="3.30.230.10:FF:000003">
    <property type="entry name" value="Elongation factor G"/>
    <property type="match status" value="1"/>
</dbReference>
<dbReference type="FunFam" id="3.30.70.240:FF:000001">
    <property type="entry name" value="Elongation factor G"/>
    <property type="match status" value="1"/>
</dbReference>
<dbReference type="FunFam" id="3.30.70.870:FF:000001">
    <property type="entry name" value="Elongation factor G"/>
    <property type="match status" value="1"/>
</dbReference>
<dbReference type="FunFam" id="3.40.50.300:FF:000029">
    <property type="entry name" value="Elongation factor G"/>
    <property type="match status" value="1"/>
</dbReference>
<dbReference type="Gene3D" id="3.30.230.10">
    <property type="match status" value="1"/>
</dbReference>
<dbReference type="Gene3D" id="3.30.70.240">
    <property type="match status" value="1"/>
</dbReference>
<dbReference type="Gene3D" id="3.30.70.870">
    <property type="entry name" value="Elongation Factor G (Translational Gtpase), domain 3"/>
    <property type="match status" value="1"/>
</dbReference>
<dbReference type="Gene3D" id="3.40.50.300">
    <property type="entry name" value="P-loop containing nucleotide triphosphate hydrolases"/>
    <property type="match status" value="1"/>
</dbReference>
<dbReference type="Gene3D" id="2.40.30.10">
    <property type="entry name" value="Translation factors"/>
    <property type="match status" value="1"/>
</dbReference>
<dbReference type="HAMAP" id="MF_00054_B">
    <property type="entry name" value="EF_G_EF_2_B"/>
    <property type="match status" value="1"/>
</dbReference>
<dbReference type="InterPro" id="IPR041095">
    <property type="entry name" value="EFG_II"/>
</dbReference>
<dbReference type="InterPro" id="IPR009022">
    <property type="entry name" value="EFG_III"/>
</dbReference>
<dbReference type="InterPro" id="IPR035647">
    <property type="entry name" value="EFG_III/V"/>
</dbReference>
<dbReference type="InterPro" id="IPR047872">
    <property type="entry name" value="EFG_IV"/>
</dbReference>
<dbReference type="InterPro" id="IPR035649">
    <property type="entry name" value="EFG_V"/>
</dbReference>
<dbReference type="InterPro" id="IPR000640">
    <property type="entry name" value="EFG_V-like"/>
</dbReference>
<dbReference type="InterPro" id="IPR004161">
    <property type="entry name" value="EFTu-like_2"/>
</dbReference>
<dbReference type="InterPro" id="IPR027417">
    <property type="entry name" value="P-loop_NTPase"/>
</dbReference>
<dbReference type="InterPro" id="IPR020568">
    <property type="entry name" value="Ribosomal_Su5_D2-typ_SF"/>
</dbReference>
<dbReference type="InterPro" id="IPR014721">
    <property type="entry name" value="Ribsml_uS5_D2-typ_fold_subgr"/>
</dbReference>
<dbReference type="InterPro" id="IPR005225">
    <property type="entry name" value="Small_GTP-bd"/>
</dbReference>
<dbReference type="InterPro" id="IPR000795">
    <property type="entry name" value="T_Tr_GTP-bd_dom"/>
</dbReference>
<dbReference type="InterPro" id="IPR009000">
    <property type="entry name" value="Transl_B-barrel_sf"/>
</dbReference>
<dbReference type="InterPro" id="IPR004540">
    <property type="entry name" value="Transl_elong_EFG/EF2"/>
</dbReference>
<dbReference type="InterPro" id="IPR005517">
    <property type="entry name" value="Transl_elong_EFG/EF2_IV"/>
</dbReference>
<dbReference type="NCBIfam" id="TIGR00484">
    <property type="entry name" value="EF-G"/>
    <property type="match status" value="1"/>
</dbReference>
<dbReference type="NCBIfam" id="NF009379">
    <property type="entry name" value="PRK12740.1-3"/>
    <property type="match status" value="1"/>
</dbReference>
<dbReference type="NCBIfam" id="NF009381">
    <property type="entry name" value="PRK12740.1-5"/>
    <property type="match status" value="1"/>
</dbReference>
<dbReference type="NCBIfam" id="TIGR00231">
    <property type="entry name" value="small_GTP"/>
    <property type="match status" value="1"/>
</dbReference>
<dbReference type="PANTHER" id="PTHR43261:SF1">
    <property type="entry name" value="RIBOSOME-RELEASING FACTOR 2, MITOCHONDRIAL"/>
    <property type="match status" value="1"/>
</dbReference>
<dbReference type="PANTHER" id="PTHR43261">
    <property type="entry name" value="TRANSLATION ELONGATION FACTOR G-RELATED"/>
    <property type="match status" value="1"/>
</dbReference>
<dbReference type="Pfam" id="PF00679">
    <property type="entry name" value="EFG_C"/>
    <property type="match status" value="1"/>
</dbReference>
<dbReference type="Pfam" id="PF14492">
    <property type="entry name" value="EFG_III"/>
    <property type="match status" value="1"/>
</dbReference>
<dbReference type="Pfam" id="PF03764">
    <property type="entry name" value="EFG_IV"/>
    <property type="match status" value="1"/>
</dbReference>
<dbReference type="Pfam" id="PF00009">
    <property type="entry name" value="GTP_EFTU"/>
    <property type="match status" value="1"/>
</dbReference>
<dbReference type="Pfam" id="PF03144">
    <property type="entry name" value="GTP_EFTU_D2"/>
    <property type="match status" value="1"/>
</dbReference>
<dbReference type="PRINTS" id="PR00315">
    <property type="entry name" value="ELONGATNFCT"/>
</dbReference>
<dbReference type="SMART" id="SM00838">
    <property type="entry name" value="EFG_C"/>
    <property type="match status" value="1"/>
</dbReference>
<dbReference type="SMART" id="SM00889">
    <property type="entry name" value="EFG_IV"/>
    <property type="match status" value="1"/>
</dbReference>
<dbReference type="SUPFAM" id="SSF54980">
    <property type="entry name" value="EF-G C-terminal domain-like"/>
    <property type="match status" value="2"/>
</dbReference>
<dbReference type="SUPFAM" id="SSF52540">
    <property type="entry name" value="P-loop containing nucleoside triphosphate hydrolases"/>
    <property type="match status" value="1"/>
</dbReference>
<dbReference type="SUPFAM" id="SSF54211">
    <property type="entry name" value="Ribosomal protein S5 domain 2-like"/>
    <property type="match status" value="1"/>
</dbReference>
<dbReference type="SUPFAM" id="SSF50447">
    <property type="entry name" value="Translation proteins"/>
    <property type="match status" value="1"/>
</dbReference>
<dbReference type="PROSITE" id="PS51722">
    <property type="entry name" value="G_TR_2"/>
    <property type="match status" value="1"/>
</dbReference>
<organism>
    <name type="scientific">Bordetella parapertussis (strain 12822 / ATCC BAA-587 / NCTC 13253)</name>
    <dbReference type="NCBI Taxonomy" id="257311"/>
    <lineage>
        <taxon>Bacteria</taxon>
        <taxon>Pseudomonadati</taxon>
        <taxon>Pseudomonadota</taxon>
        <taxon>Betaproteobacteria</taxon>
        <taxon>Burkholderiales</taxon>
        <taxon>Alcaligenaceae</taxon>
        <taxon>Bordetella</taxon>
    </lineage>
</organism>
<proteinExistence type="inferred from homology"/>